<dbReference type="EC" id="1.1.1.27" evidence="1"/>
<dbReference type="EMBL" id="CP000312">
    <property type="protein sequence ID" value="ABG87518.1"/>
    <property type="molecule type" value="Genomic_DNA"/>
</dbReference>
<dbReference type="RefSeq" id="WP_011591264.1">
    <property type="nucleotide sequence ID" value="NC_008262.1"/>
</dbReference>
<dbReference type="SMR" id="Q0SWR1"/>
<dbReference type="KEGG" id="cpr:CPR_0102"/>
<dbReference type="UniPathway" id="UPA00554">
    <property type="reaction ID" value="UER00611"/>
</dbReference>
<dbReference type="Proteomes" id="UP000001824">
    <property type="component" value="Chromosome"/>
</dbReference>
<dbReference type="GO" id="GO:0005737">
    <property type="term" value="C:cytoplasm"/>
    <property type="evidence" value="ECO:0007669"/>
    <property type="project" value="UniProtKB-SubCell"/>
</dbReference>
<dbReference type="GO" id="GO:0004459">
    <property type="term" value="F:L-lactate dehydrogenase activity"/>
    <property type="evidence" value="ECO:0007669"/>
    <property type="project" value="UniProtKB-UniRule"/>
</dbReference>
<dbReference type="GO" id="GO:0006096">
    <property type="term" value="P:glycolytic process"/>
    <property type="evidence" value="ECO:0007669"/>
    <property type="project" value="UniProtKB-UniRule"/>
</dbReference>
<dbReference type="GO" id="GO:0006089">
    <property type="term" value="P:lactate metabolic process"/>
    <property type="evidence" value="ECO:0007669"/>
    <property type="project" value="TreeGrafter"/>
</dbReference>
<dbReference type="CDD" id="cd05292">
    <property type="entry name" value="LDH_2"/>
    <property type="match status" value="1"/>
</dbReference>
<dbReference type="FunFam" id="3.40.50.720:FF:000018">
    <property type="entry name" value="Malate dehydrogenase"/>
    <property type="match status" value="1"/>
</dbReference>
<dbReference type="Gene3D" id="3.90.110.10">
    <property type="entry name" value="Lactate dehydrogenase/glycoside hydrolase, family 4, C-terminal"/>
    <property type="match status" value="1"/>
</dbReference>
<dbReference type="Gene3D" id="3.40.50.720">
    <property type="entry name" value="NAD(P)-binding Rossmann-like Domain"/>
    <property type="match status" value="1"/>
</dbReference>
<dbReference type="HAMAP" id="MF_00488">
    <property type="entry name" value="Lactate_dehydrog"/>
    <property type="match status" value="1"/>
</dbReference>
<dbReference type="InterPro" id="IPR001557">
    <property type="entry name" value="L-lactate/malate_DH"/>
</dbReference>
<dbReference type="InterPro" id="IPR011304">
    <property type="entry name" value="L-lactate_DH"/>
</dbReference>
<dbReference type="InterPro" id="IPR018177">
    <property type="entry name" value="L-lactate_DH_AS"/>
</dbReference>
<dbReference type="InterPro" id="IPR022383">
    <property type="entry name" value="Lactate/malate_DH_C"/>
</dbReference>
<dbReference type="InterPro" id="IPR001236">
    <property type="entry name" value="Lactate/malate_DH_N"/>
</dbReference>
<dbReference type="InterPro" id="IPR015955">
    <property type="entry name" value="Lactate_DH/Glyco_Ohase_4_C"/>
</dbReference>
<dbReference type="InterPro" id="IPR036291">
    <property type="entry name" value="NAD(P)-bd_dom_sf"/>
</dbReference>
<dbReference type="NCBIfam" id="TIGR01771">
    <property type="entry name" value="L-LDH-NAD"/>
    <property type="match status" value="1"/>
</dbReference>
<dbReference type="NCBIfam" id="NF000824">
    <property type="entry name" value="PRK00066.1"/>
    <property type="match status" value="1"/>
</dbReference>
<dbReference type="NCBIfam" id="NF004863">
    <property type="entry name" value="PRK06223.1"/>
    <property type="match status" value="1"/>
</dbReference>
<dbReference type="PANTHER" id="PTHR43128">
    <property type="entry name" value="L-2-HYDROXYCARBOXYLATE DEHYDROGENASE (NAD(P)(+))"/>
    <property type="match status" value="1"/>
</dbReference>
<dbReference type="PANTHER" id="PTHR43128:SF16">
    <property type="entry name" value="L-LACTATE DEHYDROGENASE"/>
    <property type="match status" value="1"/>
</dbReference>
<dbReference type="Pfam" id="PF02866">
    <property type="entry name" value="Ldh_1_C"/>
    <property type="match status" value="1"/>
</dbReference>
<dbReference type="Pfam" id="PF00056">
    <property type="entry name" value="Ldh_1_N"/>
    <property type="match status" value="1"/>
</dbReference>
<dbReference type="PIRSF" id="PIRSF000102">
    <property type="entry name" value="Lac_mal_DH"/>
    <property type="match status" value="1"/>
</dbReference>
<dbReference type="PRINTS" id="PR00086">
    <property type="entry name" value="LLDHDRGNASE"/>
</dbReference>
<dbReference type="SUPFAM" id="SSF56327">
    <property type="entry name" value="LDH C-terminal domain-like"/>
    <property type="match status" value="1"/>
</dbReference>
<dbReference type="SUPFAM" id="SSF51735">
    <property type="entry name" value="NAD(P)-binding Rossmann-fold domains"/>
    <property type="match status" value="1"/>
</dbReference>
<dbReference type="PROSITE" id="PS00064">
    <property type="entry name" value="L_LDH"/>
    <property type="match status" value="1"/>
</dbReference>
<proteinExistence type="inferred from homology"/>
<evidence type="ECO:0000255" key="1">
    <source>
        <dbReference type="HAMAP-Rule" id="MF_00488"/>
    </source>
</evidence>
<name>LDH_CLOPS</name>
<gene>
    <name evidence="1" type="primary">ldh</name>
    <name type="ordered locus">CPR_0102</name>
</gene>
<feature type="chain" id="PRO_1000026502" description="L-lactate dehydrogenase">
    <location>
        <begin position="1"/>
        <end position="317"/>
    </location>
</feature>
<feature type="active site" description="Proton acceptor" evidence="1">
    <location>
        <position position="178"/>
    </location>
</feature>
<feature type="binding site" evidence="1">
    <location>
        <position position="17"/>
    </location>
    <ligand>
        <name>NAD(+)</name>
        <dbReference type="ChEBI" id="CHEBI:57540"/>
    </ligand>
</feature>
<feature type="binding site" evidence="1">
    <location>
        <position position="38"/>
    </location>
    <ligand>
        <name>NAD(+)</name>
        <dbReference type="ChEBI" id="CHEBI:57540"/>
    </ligand>
</feature>
<feature type="binding site" evidence="1">
    <location>
        <position position="43"/>
    </location>
    <ligand>
        <name>NAD(+)</name>
        <dbReference type="ChEBI" id="CHEBI:57540"/>
    </ligand>
</feature>
<feature type="binding site" evidence="1">
    <location>
        <position position="68"/>
    </location>
    <ligand>
        <name>NAD(+)</name>
        <dbReference type="ChEBI" id="CHEBI:57540"/>
    </ligand>
</feature>
<feature type="binding site" evidence="1">
    <location>
        <begin position="82"/>
        <end position="83"/>
    </location>
    <ligand>
        <name>NAD(+)</name>
        <dbReference type="ChEBI" id="CHEBI:57540"/>
    </ligand>
</feature>
<feature type="binding site" evidence="1">
    <location>
        <position position="91"/>
    </location>
    <ligand>
        <name>substrate</name>
    </ligand>
</feature>
<feature type="binding site" evidence="1">
    <location>
        <position position="104"/>
    </location>
    <ligand>
        <name>NAD(+)</name>
        <dbReference type="ChEBI" id="CHEBI:57540"/>
    </ligand>
</feature>
<feature type="binding site" evidence="1">
    <location>
        <begin position="121"/>
        <end position="123"/>
    </location>
    <ligand>
        <name>NAD(+)</name>
        <dbReference type="ChEBI" id="CHEBI:57540"/>
    </ligand>
</feature>
<feature type="binding site" evidence="1">
    <location>
        <begin position="123"/>
        <end position="126"/>
    </location>
    <ligand>
        <name>substrate</name>
    </ligand>
</feature>
<feature type="binding site" evidence="1">
    <location>
        <position position="146"/>
    </location>
    <ligand>
        <name>NAD(+)</name>
        <dbReference type="ChEBI" id="CHEBI:57540"/>
    </ligand>
</feature>
<feature type="binding site" evidence="1">
    <location>
        <begin position="151"/>
        <end position="154"/>
    </location>
    <ligand>
        <name>substrate</name>
    </ligand>
</feature>
<feature type="binding site" evidence="1">
    <location>
        <position position="156"/>
    </location>
    <ligand>
        <name>beta-D-fructose 1,6-bisphosphate</name>
        <dbReference type="ChEBI" id="CHEBI:32966"/>
        <note>allosteric activator</note>
    </ligand>
</feature>
<feature type="binding site" evidence="1">
    <location>
        <position position="171"/>
    </location>
    <ligand>
        <name>beta-D-fructose 1,6-bisphosphate</name>
        <dbReference type="ChEBI" id="CHEBI:32966"/>
        <note>allosteric activator</note>
    </ligand>
</feature>
<feature type="binding site" evidence="1">
    <location>
        <position position="233"/>
    </location>
    <ligand>
        <name>substrate</name>
    </ligand>
</feature>
<feature type="modified residue" description="Phosphotyrosine" evidence="1">
    <location>
        <position position="224"/>
    </location>
</feature>
<organism>
    <name type="scientific">Clostridium perfringens (strain SM101 / Type A)</name>
    <dbReference type="NCBI Taxonomy" id="289380"/>
    <lineage>
        <taxon>Bacteria</taxon>
        <taxon>Bacillati</taxon>
        <taxon>Bacillota</taxon>
        <taxon>Clostridia</taxon>
        <taxon>Eubacteriales</taxon>
        <taxon>Clostridiaceae</taxon>
        <taxon>Clostridium</taxon>
    </lineage>
</organism>
<accession>Q0SWR1</accession>
<reference key="1">
    <citation type="journal article" date="2006" name="Genome Res.">
        <title>Skewed genomic variability in strains of the toxigenic bacterial pathogen, Clostridium perfringens.</title>
        <authorList>
            <person name="Myers G.S.A."/>
            <person name="Rasko D.A."/>
            <person name="Cheung J.K."/>
            <person name="Ravel J."/>
            <person name="Seshadri R."/>
            <person name="DeBoy R.T."/>
            <person name="Ren Q."/>
            <person name="Varga J."/>
            <person name="Awad M.M."/>
            <person name="Brinkac L.M."/>
            <person name="Daugherty S.C."/>
            <person name="Haft D.H."/>
            <person name="Dodson R.J."/>
            <person name="Madupu R."/>
            <person name="Nelson W.C."/>
            <person name="Rosovitz M.J."/>
            <person name="Sullivan S.A."/>
            <person name="Khouri H."/>
            <person name="Dimitrov G.I."/>
            <person name="Watkins K.L."/>
            <person name="Mulligan S."/>
            <person name="Benton J."/>
            <person name="Radune D."/>
            <person name="Fisher D.J."/>
            <person name="Atkins H.S."/>
            <person name="Hiscox T."/>
            <person name="Jost B.H."/>
            <person name="Billington S.J."/>
            <person name="Songer J.G."/>
            <person name="McClane B.A."/>
            <person name="Titball R.W."/>
            <person name="Rood J.I."/>
            <person name="Melville S.B."/>
            <person name="Paulsen I.T."/>
        </authorList>
    </citation>
    <scope>NUCLEOTIDE SEQUENCE [LARGE SCALE GENOMIC DNA]</scope>
    <source>
        <strain>SM101 / Type A</strain>
    </source>
</reference>
<protein>
    <recommendedName>
        <fullName evidence="1">L-lactate dehydrogenase</fullName>
        <shortName evidence="1">L-LDH</shortName>
        <ecNumber evidence="1">1.1.1.27</ecNumber>
    </recommendedName>
</protein>
<keyword id="KW-0021">Allosteric enzyme</keyword>
<keyword id="KW-0963">Cytoplasm</keyword>
<keyword id="KW-0520">NAD</keyword>
<keyword id="KW-0560">Oxidoreductase</keyword>
<keyword id="KW-0597">Phosphoprotein</keyword>
<comment type="function">
    <text evidence="1">Catalyzes the conversion of lactate to pyruvate.</text>
</comment>
<comment type="catalytic activity">
    <reaction evidence="1">
        <text>(S)-lactate + NAD(+) = pyruvate + NADH + H(+)</text>
        <dbReference type="Rhea" id="RHEA:23444"/>
        <dbReference type="ChEBI" id="CHEBI:15361"/>
        <dbReference type="ChEBI" id="CHEBI:15378"/>
        <dbReference type="ChEBI" id="CHEBI:16651"/>
        <dbReference type="ChEBI" id="CHEBI:57540"/>
        <dbReference type="ChEBI" id="CHEBI:57945"/>
        <dbReference type="EC" id="1.1.1.27"/>
    </reaction>
</comment>
<comment type="activity regulation">
    <text evidence="1">Allosterically activated by fructose 1,6-bisphosphate (FBP).</text>
</comment>
<comment type="pathway">
    <text evidence="1">Fermentation; pyruvate fermentation to lactate; (S)-lactate from pyruvate: step 1/1.</text>
</comment>
<comment type="subunit">
    <text evidence="1">Homotetramer.</text>
</comment>
<comment type="subcellular location">
    <subcellularLocation>
        <location evidence="1">Cytoplasm</location>
    </subcellularLocation>
</comment>
<comment type="similarity">
    <text evidence="1">Belongs to the LDH/MDH superfamily. LDH family.</text>
</comment>
<sequence>MIREKTNKISIIGAGFVGSTTAFALMQDGLASEIVIVDINKDKAHAEAMDLAQGAAFVKSVDIKSGDYADTKDSDIVIITAGVGPKPGETRLDIINKNLKIFKSIVPEVVKYSPNSILLVVSNPVDILTYITYKLSGFPKERVVGSGTVLDTSRLKYMLSEHFDIDARNVHTYIIGEHGDSEITAWSLTNIAGANVDEYCKTVCANCDGSFKKELPEKVKNAAYEIINSKGYTNYAVALAVTRIVEAILRDENAILTVSSLFEGQYGIDNVYLAMPTIVDRSGARQILDVPISNEEKENLIKSAEILKGHIANSELD</sequence>